<sequence>MEMLQGLLLWLLLSVGGVWASRGPLRPLCRPINATLAAENEACPVCITFTTSICAGYCPSMVRVLPAALPPAPQPVCTYHELRFASIRLPGCPPGVDPMVSFPVALSCRCGPCRLSSSDCGGPRAQPLACDRPPLPGLLFL</sequence>
<keyword id="KW-1015">Disulfide bond</keyword>
<keyword id="KW-0325">Glycoprotein</keyword>
<keyword id="KW-0372">Hormone</keyword>
<keyword id="KW-0964">Secreted</keyword>
<keyword id="KW-0732">Signal</keyword>
<gene>
    <name type="primary">LHB1</name>
</gene>
<gene>
    <name type="primary">LHB2</name>
</gene>
<evidence type="ECO:0000250" key="1"/>
<evidence type="ECO:0000255" key="2"/>
<evidence type="ECO:0000305" key="3"/>
<protein>
    <recommendedName>
        <fullName>Lutropin subunit beta</fullName>
    </recommendedName>
    <alternativeName>
        <fullName>Luteinizing hormone subunit beta</fullName>
        <shortName>LH-B</shortName>
        <shortName>LSH-B</shortName>
        <shortName>LSH-beta</shortName>
    </alternativeName>
    <alternativeName>
        <fullName>Lutropin beta chain</fullName>
    </alternativeName>
</protein>
<comment type="function">
    <text>Promotes spermatogenesis and ovulation by stimulating the testes and ovaries to synthesize steroids.</text>
</comment>
<comment type="subunit">
    <text>Heterodimer of a common alpha chain and a unique beta chain which confers biological specificity to thyrotropin, lutropin, follitropin and gonadotropin.</text>
</comment>
<comment type="subcellular location">
    <subcellularLocation>
        <location>Secreted</location>
    </subcellularLocation>
</comment>
<comment type="similarity">
    <text evidence="3">Belongs to the glycoprotein hormones subunit beta family.</text>
</comment>
<proteinExistence type="evidence at transcript level"/>
<reference key="1">
    <citation type="journal article" date="1998" name="J. Mol. Endocrinol.">
        <title>Duplication of the southern white rhinoceros (Ceratotherium simum simum) luteinizing hormone beta subunit gene.</title>
        <authorList>
            <person name="Lund L.A."/>
            <person name="Sherman G.B."/>
        </authorList>
    </citation>
    <scope>NUCLEOTIDE SEQUENCE [GENOMIC DNA]</scope>
</reference>
<reference key="2">
    <citation type="journal article" date="1997" name="Gene">
        <title>Characterization and phylogenetic significance of rhinoceros luteinizing hormone beta (LHbeta) subunit messenger RNA structure, complementary DNA sequence and gene copy number.</title>
        <authorList>
            <person name="Sherman G.B."/>
            <person name="Lund L.A."/>
            <person name="Bunick D."/>
            <person name="Winn R.J."/>
        </authorList>
    </citation>
    <scope>NUCLEOTIDE SEQUENCE [MRNA] OF 7-141</scope>
    <source>
        <tissue>Pituitary</tissue>
    </source>
</reference>
<feature type="signal peptide" evidence="1">
    <location>
        <begin position="1"/>
        <end position="20"/>
    </location>
</feature>
<feature type="chain" id="PRO_0000011721" description="Lutropin subunit beta">
    <location>
        <begin position="21"/>
        <end position="141"/>
    </location>
</feature>
<feature type="glycosylation site" description="N-linked (GlcNAc...) asparagine" evidence="2">
    <location>
        <position position="33"/>
    </location>
</feature>
<feature type="disulfide bond" evidence="1">
    <location>
        <begin position="29"/>
        <end position="77"/>
    </location>
</feature>
<feature type="disulfide bond" evidence="1">
    <location>
        <begin position="43"/>
        <end position="92"/>
    </location>
</feature>
<feature type="disulfide bond" evidence="1">
    <location>
        <begin position="46"/>
        <end position="130"/>
    </location>
</feature>
<feature type="disulfide bond" evidence="1">
    <location>
        <begin position="54"/>
        <end position="108"/>
    </location>
</feature>
<feature type="disulfide bond" evidence="1">
    <location>
        <begin position="58"/>
        <end position="110"/>
    </location>
</feature>
<feature type="disulfide bond" evidence="1">
    <location>
        <begin position="113"/>
        <end position="120"/>
    </location>
</feature>
<feature type="sequence conflict" description="In Ref. 2; AAB71983." evidence="3" ref="2">
    <original>R</original>
    <variation>K</variation>
    <location>
        <position position="22"/>
    </location>
</feature>
<accession>O77835</accession>
<accession>O19102</accession>
<dbReference type="EMBL" id="AF024521">
    <property type="protein sequence ID" value="AAC36049.1"/>
    <property type="molecule type" value="Genomic_DNA"/>
</dbReference>
<dbReference type="EMBL" id="AF024520">
    <property type="protein sequence ID" value="AAC36048.1"/>
    <property type="molecule type" value="Genomic_DNA"/>
</dbReference>
<dbReference type="EMBL" id="U72659">
    <property type="protein sequence ID" value="AAB71983.1"/>
    <property type="molecule type" value="mRNA"/>
</dbReference>
<dbReference type="SMR" id="O77835"/>
<dbReference type="GlyCosmos" id="O77835">
    <property type="glycosylation" value="1 site, No reported glycans"/>
</dbReference>
<dbReference type="GO" id="GO:0005737">
    <property type="term" value="C:cytoplasm"/>
    <property type="evidence" value="ECO:0007669"/>
    <property type="project" value="TreeGrafter"/>
</dbReference>
<dbReference type="GO" id="GO:0005615">
    <property type="term" value="C:extracellular space"/>
    <property type="evidence" value="ECO:0007669"/>
    <property type="project" value="TreeGrafter"/>
</dbReference>
<dbReference type="GO" id="GO:0005179">
    <property type="term" value="F:hormone activity"/>
    <property type="evidence" value="ECO:0007669"/>
    <property type="project" value="UniProtKB-KW"/>
</dbReference>
<dbReference type="GO" id="GO:0007186">
    <property type="term" value="P:G protein-coupled receptor signaling pathway"/>
    <property type="evidence" value="ECO:0007669"/>
    <property type="project" value="TreeGrafter"/>
</dbReference>
<dbReference type="CDD" id="cd00069">
    <property type="entry name" value="GHB_like"/>
    <property type="match status" value="1"/>
</dbReference>
<dbReference type="FunFam" id="2.10.90.10:FF:000007">
    <property type="entry name" value="Luteinizing hormone beta subunit"/>
    <property type="match status" value="1"/>
</dbReference>
<dbReference type="Gene3D" id="2.10.90.10">
    <property type="entry name" value="Cystine-knot cytokines"/>
    <property type="match status" value="1"/>
</dbReference>
<dbReference type="InterPro" id="IPR029034">
    <property type="entry name" value="Cystine-knot_cytokine"/>
</dbReference>
<dbReference type="InterPro" id="IPR006208">
    <property type="entry name" value="Glyco_hormone_CN"/>
</dbReference>
<dbReference type="InterPro" id="IPR001545">
    <property type="entry name" value="Gonadotropin_bsu"/>
</dbReference>
<dbReference type="InterPro" id="IPR018245">
    <property type="entry name" value="Gonadotropin_bsu_CS"/>
</dbReference>
<dbReference type="PANTHER" id="PTHR11515">
    <property type="entry name" value="GLYCOPROTEIN HORMONE BETA CHAIN"/>
    <property type="match status" value="1"/>
</dbReference>
<dbReference type="PANTHER" id="PTHR11515:SF11">
    <property type="entry name" value="LUTROPIN SUBUNIT BETA"/>
    <property type="match status" value="1"/>
</dbReference>
<dbReference type="Pfam" id="PF00007">
    <property type="entry name" value="Cys_knot"/>
    <property type="match status" value="1"/>
</dbReference>
<dbReference type="SMART" id="SM00068">
    <property type="entry name" value="GHB"/>
    <property type="match status" value="1"/>
</dbReference>
<dbReference type="SUPFAM" id="SSF57501">
    <property type="entry name" value="Cystine-knot cytokines"/>
    <property type="match status" value="1"/>
</dbReference>
<dbReference type="PROSITE" id="PS00261">
    <property type="entry name" value="GLYCO_HORMONE_BETA_1"/>
    <property type="match status" value="1"/>
</dbReference>
<dbReference type="PROSITE" id="PS00689">
    <property type="entry name" value="GLYCO_HORMONE_BETA_2"/>
    <property type="match status" value="1"/>
</dbReference>
<organism>
    <name type="scientific">Ceratotherium simum</name>
    <name type="common">White rhinoceros</name>
    <name type="synonym">Square-lipped rhinoceros</name>
    <dbReference type="NCBI Taxonomy" id="9807"/>
    <lineage>
        <taxon>Eukaryota</taxon>
        <taxon>Metazoa</taxon>
        <taxon>Chordata</taxon>
        <taxon>Craniata</taxon>
        <taxon>Vertebrata</taxon>
        <taxon>Euteleostomi</taxon>
        <taxon>Mammalia</taxon>
        <taxon>Eutheria</taxon>
        <taxon>Laurasiatheria</taxon>
        <taxon>Perissodactyla</taxon>
        <taxon>Rhinocerotidae</taxon>
        <taxon>Ceratotherium</taxon>
    </lineage>
</organism>
<name>LSHB_CERSI</name>